<comment type="function">
    <text evidence="1">Inhibitor of protein-phosphatase 1 (PP1). Binds to and inhibits PP1 activity.</text>
</comment>
<comment type="subunit">
    <text evidence="4">Interacts with human protein phosphatase PPP1C.</text>
</comment>
<comment type="interaction">
    <interactant intactId="EBI-25523851">
        <id>Q9FIK2</id>
    </interactant>
    <interactant intactId="EBI-1803261">
        <id>Q8S307</id>
        <label>BZR1</label>
    </interactant>
    <organismsDiffer>false</organismsDiffer>
    <experiments>3</experiments>
</comment>
<comment type="interaction">
    <interactant intactId="EBI-25523851">
        <id>Q9FIK2</id>
    </interactant>
    <interactant intactId="EBI-632257">
        <id>O24409</id>
        <label>IAA19</label>
    </interactant>
    <organismsDiffer>false</organismsDiffer>
    <experiments>3</experiments>
</comment>
<comment type="interaction">
    <interactant intactId="EBI-25523851">
        <id>Q9FIK2</id>
    </interactant>
    <interactant intactId="EBI-3947418">
        <id>Q8LAL2</id>
        <label>IAA26</label>
    </interactant>
    <organismsDiffer>false</organismsDiffer>
    <experiments>3</experiments>
</comment>
<comment type="interaction">
    <interactant intactId="EBI-25523851">
        <id>Q9FIK2</id>
    </interactant>
    <interactant intactId="EBI-3946459">
        <id>Q9C5X0</id>
        <label>IAA34</label>
    </interactant>
    <organismsDiffer>false</organismsDiffer>
    <experiments>3</experiments>
</comment>
<comment type="interaction">
    <interactant intactId="EBI-25523851">
        <id>Q9FIK2</id>
    </interactant>
    <interactant intactId="EBI-3946487">
        <id>P33078</id>
        <label>IAA5</label>
    </interactant>
    <organismsDiffer>false</organismsDiffer>
    <experiments>3</experiments>
</comment>
<comment type="interaction">
    <interactant intactId="EBI-25523851">
        <id>Q9FIK2</id>
    </interactant>
    <interactant intactId="EBI-1554124">
        <id>Q38824</id>
        <label>IAA6</label>
    </interactant>
    <organismsDiffer>false</organismsDiffer>
    <experiments>3</experiments>
</comment>
<comment type="interaction">
    <interactant intactId="EBI-25523851">
        <id>Q9FIK2</id>
    </interactant>
    <interactant intactId="EBI-632216">
        <id>Q38827</id>
        <label>IAA9</label>
    </interactant>
    <organismsDiffer>false</organismsDiffer>
    <experiments>3</experiments>
</comment>
<protein>
    <recommendedName>
        <fullName evidence="5">Protein phosphatase 1 regulatory inhibitor subunit PPP1R8 homolog</fullName>
    </recommendedName>
</protein>
<proteinExistence type="evidence at protein level"/>
<dbReference type="EMBL" id="AB016886">
    <property type="protein sequence ID" value="BAB11326.1"/>
    <property type="molecule type" value="Genomic_DNA"/>
</dbReference>
<dbReference type="EMBL" id="CP002688">
    <property type="protein sequence ID" value="AED95572.1"/>
    <property type="molecule type" value="Genomic_DNA"/>
</dbReference>
<dbReference type="EMBL" id="AY075675">
    <property type="protein sequence ID" value="AAL77682.1"/>
    <property type="molecule type" value="mRNA"/>
</dbReference>
<dbReference type="EMBL" id="BT010168">
    <property type="protein sequence ID" value="AAQ22637.1"/>
    <property type="molecule type" value="mRNA"/>
</dbReference>
<dbReference type="RefSeq" id="NP_199590.1">
    <property type="nucleotide sequence ID" value="NM_124153.6"/>
</dbReference>
<dbReference type="SMR" id="Q9FIK2"/>
<dbReference type="FunCoup" id="Q9FIK2">
    <property type="interactions" value="863"/>
</dbReference>
<dbReference type="IntAct" id="Q9FIK2">
    <property type="interactions" value="8"/>
</dbReference>
<dbReference type="STRING" id="3702.Q9FIK2"/>
<dbReference type="iPTMnet" id="Q9FIK2"/>
<dbReference type="PaxDb" id="3702-AT5G47790.1"/>
<dbReference type="ProteomicsDB" id="249084"/>
<dbReference type="EnsemblPlants" id="AT5G47790.1">
    <property type="protein sequence ID" value="AT5G47790.1"/>
    <property type="gene ID" value="AT5G47790"/>
</dbReference>
<dbReference type="GeneID" id="834830"/>
<dbReference type="Gramene" id="AT5G47790.1">
    <property type="protein sequence ID" value="AT5G47790.1"/>
    <property type="gene ID" value="AT5G47790"/>
</dbReference>
<dbReference type="KEGG" id="ath:AT5G47790"/>
<dbReference type="Araport" id="AT5G47790"/>
<dbReference type="TAIR" id="AT5G47790"/>
<dbReference type="eggNOG" id="KOG1880">
    <property type="taxonomic scope" value="Eukaryota"/>
</dbReference>
<dbReference type="HOGENOM" id="CLU_032430_0_0_1"/>
<dbReference type="InParanoid" id="Q9FIK2"/>
<dbReference type="OMA" id="NWHPPDW"/>
<dbReference type="PhylomeDB" id="Q9FIK2"/>
<dbReference type="PRO" id="PR:Q9FIK2"/>
<dbReference type="Proteomes" id="UP000006548">
    <property type="component" value="Chromosome 5"/>
</dbReference>
<dbReference type="ExpressionAtlas" id="Q9FIK2">
    <property type="expression patterns" value="baseline and differential"/>
</dbReference>
<dbReference type="GO" id="GO:0004864">
    <property type="term" value="F:protein phosphatase inhibitor activity"/>
    <property type="evidence" value="ECO:0007669"/>
    <property type="project" value="UniProtKB-KW"/>
</dbReference>
<dbReference type="CDD" id="cd22674">
    <property type="entry name" value="FHA_PPP1R8"/>
    <property type="match status" value="1"/>
</dbReference>
<dbReference type="FunFam" id="2.60.200.20:FF:000019">
    <property type="entry name" value="Nuclear inhibitor of protein phosphatase"/>
    <property type="match status" value="1"/>
</dbReference>
<dbReference type="Gene3D" id="2.60.200.20">
    <property type="match status" value="1"/>
</dbReference>
<dbReference type="InterPro" id="IPR050923">
    <property type="entry name" value="Cell_Proc_Reg/RNA_Proc"/>
</dbReference>
<dbReference type="InterPro" id="IPR000253">
    <property type="entry name" value="FHA_dom"/>
</dbReference>
<dbReference type="InterPro" id="IPR008984">
    <property type="entry name" value="SMAD_FHA_dom_sf"/>
</dbReference>
<dbReference type="PANTHER" id="PTHR23308">
    <property type="entry name" value="NUCLEAR INHIBITOR OF PROTEIN PHOSPHATASE-1"/>
    <property type="match status" value="1"/>
</dbReference>
<dbReference type="Pfam" id="PF00498">
    <property type="entry name" value="FHA"/>
    <property type="match status" value="1"/>
</dbReference>
<dbReference type="SMART" id="SM00240">
    <property type="entry name" value="FHA"/>
    <property type="match status" value="1"/>
</dbReference>
<dbReference type="SUPFAM" id="SSF49879">
    <property type="entry name" value="SMAD/FHA domain"/>
    <property type="match status" value="1"/>
</dbReference>
<dbReference type="PROSITE" id="PS50006">
    <property type="entry name" value="FHA_DOMAIN"/>
    <property type="match status" value="1"/>
</dbReference>
<gene>
    <name evidence="6" type="ordered locus">At5g47790</name>
    <name evidence="7" type="ORF">MCA23.11</name>
</gene>
<evidence type="ECO:0000250" key="1">
    <source>
        <dbReference type="UniProtKB" id="Q9LTK0"/>
    </source>
</evidence>
<evidence type="ECO:0000255" key="2">
    <source>
        <dbReference type="PROSITE-ProRule" id="PRU00086"/>
    </source>
</evidence>
<evidence type="ECO:0000256" key="3">
    <source>
        <dbReference type="SAM" id="MobiDB-lite"/>
    </source>
</evidence>
<evidence type="ECO:0000269" key="4">
    <source>
    </source>
</evidence>
<evidence type="ECO:0000305" key="5"/>
<evidence type="ECO:0000312" key="6">
    <source>
        <dbReference type="Araport" id="AT5G47790"/>
    </source>
</evidence>
<evidence type="ECO:0000312" key="7">
    <source>
        <dbReference type="EMBL" id="BAB11326.1"/>
    </source>
</evidence>
<sequence>MYGRSGLDRFKKSQTSEPFSVSANPPPVVQQHLSPEALSGQKTQIGAGQSNWHPPDWAIEPRAGVYSLEVVKDGQILDRIHLDRRRHIFGRQHQTCDFVLDHQSVSRQHAAVVPHKNGSIFVIDLGSAHGTFVANERLTKDTPVELEVGQSLRFAASTRIYLLRKNSEALFSRPPPPAEIKLPPPPDASDEEAVVAYNTLLNRYGLSNGESGGMLGKRKEKTGSEAGVAKRMKKVRVSFRDQLGGELAEIVGMSDGADVETEPGPINVKEGSLVGKYESLVRVTLIPKGKVKEEKAFTGGTRGGVTDRLQEAMNMLKRGPKTGIYDDLYGGDSLAKAVGTSWASVSQPAAETECGGVGEEDDNDDLFGD</sequence>
<accession>Q9FIK2</accession>
<feature type="chain" id="PRO_0000442227" description="Protein phosphatase 1 regulatory inhibitor subunit PPP1R8 homolog">
    <location>
        <begin position="1"/>
        <end position="369"/>
    </location>
</feature>
<feature type="domain" description="FHA" evidence="2">
    <location>
        <begin position="87"/>
        <end position="138"/>
    </location>
</feature>
<feature type="region of interest" description="Disordered" evidence="3">
    <location>
        <begin position="1"/>
        <end position="26"/>
    </location>
</feature>
<feature type="region of interest" description="Disordered" evidence="3">
    <location>
        <begin position="345"/>
        <end position="369"/>
    </location>
</feature>
<feature type="compositionally biased region" description="Basic and acidic residues" evidence="3">
    <location>
        <begin position="1"/>
        <end position="11"/>
    </location>
</feature>
<feature type="compositionally biased region" description="Polar residues" evidence="3">
    <location>
        <begin position="13"/>
        <end position="23"/>
    </location>
</feature>
<feature type="compositionally biased region" description="Acidic residues" evidence="3">
    <location>
        <begin position="358"/>
        <end position="369"/>
    </location>
</feature>
<organism>
    <name type="scientific">Arabidopsis thaliana</name>
    <name type="common">Mouse-ear cress</name>
    <dbReference type="NCBI Taxonomy" id="3702"/>
    <lineage>
        <taxon>Eukaryota</taxon>
        <taxon>Viridiplantae</taxon>
        <taxon>Streptophyta</taxon>
        <taxon>Embryophyta</taxon>
        <taxon>Tracheophyta</taxon>
        <taxon>Spermatophyta</taxon>
        <taxon>Magnoliopsida</taxon>
        <taxon>eudicotyledons</taxon>
        <taxon>Gunneridae</taxon>
        <taxon>Pentapetalae</taxon>
        <taxon>rosids</taxon>
        <taxon>malvids</taxon>
        <taxon>Brassicales</taxon>
        <taxon>Brassicaceae</taxon>
        <taxon>Camelineae</taxon>
        <taxon>Arabidopsis</taxon>
    </lineage>
</organism>
<name>PP1R8_ARATH</name>
<reference key="1">
    <citation type="journal article" date="1998" name="DNA Res.">
        <title>Structural analysis of Arabidopsis thaliana chromosome 5. VIII. Sequence features of the regions of 1,081,958 bp covered by seventeen physically assigned P1 and TAC clones.</title>
        <authorList>
            <person name="Asamizu E."/>
            <person name="Sato S."/>
            <person name="Kaneko T."/>
            <person name="Nakamura Y."/>
            <person name="Kotani H."/>
            <person name="Miyajima N."/>
            <person name="Tabata S."/>
        </authorList>
    </citation>
    <scope>NUCLEOTIDE SEQUENCE [LARGE SCALE GENOMIC DNA]</scope>
    <source>
        <strain>cv. Columbia</strain>
    </source>
</reference>
<reference key="2">
    <citation type="journal article" date="2017" name="Plant J.">
        <title>Araport11: a complete reannotation of the Arabidopsis thaliana reference genome.</title>
        <authorList>
            <person name="Cheng C.Y."/>
            <person name="Krishnakumar V."/>
            <person name="Chan A.P."/>
            <person name="Thibaud-Nissen F."/>
            <person name="Schobel S."/>
            <person name="Town C.D."/>
        </authorList>
    </citation>
    <scope>GENOME REANNOTATION</scope>
    <source>
        <strain>cv. Columbia</strain>
    </source>
</reference>
<reference key="3">
    <citation type="journal article" date="2003" name="Science">
        <title>Empirical analysis of transcriptional activity in the Arabidopsis genome.</title>
        <authorList>
            <person name="Yamada K."/>
            <person name="Lim J."/>
            <person name="Dale J.M."/>
            <person name="Chen H."/>
            <person name="Shinn P."/>
            <person name="Palm C.J."/>
            <person name="Southwick A.M."/>
            <person name="Wu H.C."/>
            <person name="Kim C.J."/>
            <person name="Nguyen M."/>
            <person name="Pham P.K."/>
            <person name="Cheuk R.F."/>
            <person name="Karlin-Newmann G."/>
            <person name="Liu S.X."/>
            <person name="Lam B."/>
            <person name="Sakano H."/>
            <person name="Wu T."/>
            <person name="Yu G."/>
            <person name="Miranda M."/>
            <person name="Quach H.L."/>
            <person name="Tripp M."/>
            <person name="Chang C.H."/>
            <person name="Lee J.M."/>
            <person name="Toriumi M.J."/>
            <person name="Chan M.M."/>
            <person name="Tang C.C."/>
            <person name="Onodera C.S."/>
            <person name="Deng J.M."/>
            <person name="Akiyama K."/>
            <person name="Ansari Y."/>
            <person name="Arakawa T."/>
            <person name="Banh J."/>
            <person name="Banno F."/>
            <person name="Bowser L."/>
            <person name="Brooks S.Y."/>
            <person name="Carninci P."/>
            <person name="Chao Q."/>
            <person name="Choy N."/>
            <person name="Enju A."/>
            <person name="Goldsmith A.D."/>
            <person name="Gurjal M."/>
            <person name="Hansen N.F."/>
            <person name="Hayashizaki Y."/>
            <person name="Johnson-Hopson C."/>
            <person name="Hsuan V.W."/>
            <person name="Iida K."/>
            <person name="Karnes M."/>
            <person name="Khan S."/>
            <person name="Koesema E."/>
            <person name="Ishida J."/>
            <person name="Jiang P.X."/>
            <person name="Jones T."/>
            <person name="Kawai J."/>
            <person name="Kamiya A."/>
            <person name="Meyers C."/>
            <person name="Nakajima M."/>
            <person name="Narusaka M."/>
            <person name="Seki M."/>
            <person name="Sakurai T."/>
            <person name="Satou M."/>
            <person name="Tamse R."/>
            <person name="Vaysberg M."/>
            <person name="Wallender E.K."/>
            <person name="Wong C."/>
            <person name="Yamamura Y."/>
            <person name="Yuan S."/>
            <person name="Shinozaki K."/>
            <person name="Davis R.W."/>
            <person name="Theologis A."/>
            <person name="Ecker J.R."/>
        </authorList>
    </citation>
    <scope>NUCLEOTIDE SEQUENCE [LARGE SCALE MRNA]</scope>
    <source>
        <strain>cv. Columbia</strain>
    </source>
</reference>
<reference key="4">
    <citation type="journal article" date="2011" name="Biochem. J.">
        <title>Identification and characterization of AtI-2, an Arabidopsis homologue of an ancient protein phosphatase 1 (PP1) regulatory subunit.</title>
        <authorList>
            <person name="Templeton G.W."/>
            <person name="Nimick M."/>
            <person name="Morrice N."/>
            <person name="Campbell D."/>
            <person name="Goudreault M."/>
            <person name="Gingras A.C."/>
            <person name="Takemiya A."/>
            <person name="Shimazaki K."/>
            <person name="Moorhead G.B."/>
        </authorList>
    </citation>
    <scope>IDENTIFICATION BY MASS SPECTROMETRY</scope>
    <scope>INTERACTION WITH HUMAN PROTEIN PHOSPHATASE PPP1CC</scope>
</reference>
<keyword id="KW-0650">Protein phosphatase inhibitor</keyword>
<keyword id="KW-1185">Reference proteome</keyword>